<accession>Q8SSI9</accession>
<dbReference type="EMBL" id="AL391737">
    <property type="protein sequence ID" value="CAD25006.1"/>
    <property type="molecule type" value="Genomic_DNA"/>
</dbReference>
<dbReference type="RefSeq" id="XP_965971.1">
    <property type="nucleotide sequence ID" value="XM_960878.1"/>
</dbReference>
<dbReference type="SMR" id="Q8SSI9"/>
<dbReference type="FunCoup" id="Q8SSI9">
    <property type="interactions" value="25"/>
</dbReference>
<dbReference type="STRING" id="284813.Q8SSI9"/>
<dbReference type="VEuPathDB" id="MicrosporidiaDB:ECU01_1330"/>
<dbReference type="HOGENOM" id="CLU_068315_3_1_1"/>
<dbReference type="InParanoid" id="Q8SSI9"/>
<dbReference type="OMA" id="PHDAQVM"/>
<dbReference type="OrthoDB" id="341924at2759"/>
<dbReference type="Proteomes" id="UP000000819">
    <property type="component" value="Chromosome I"/>
</dbReference>
<dbReference type="GO" id="GO:0000124">
    <property type="term" value="C:SAGA complex"/>
    <property type="evidence" value="ECO:0007669"/>
    <property type="project" value="TreeGrafter"/>
</dbReference>
<dbReference type="GO" id="GO:0005669">
    <property type="term" value="C:transcription factor TFIID complex"/>
    <property type="evidence" value="ECO:0007669"/>
    <property type="project" value="TreeGrafter"/>
</dbReference>
<dbReference type="GO" id="GO:0046982">
    <property type="term" value="F:protein heterodimerization activity"/>
    <property type="evidence" value="ECO:0007669"/>
    <property type="project" value="InterPro"/>
</dbReference>
<dbReference type="GO" id="GO:0016251">
    <property type="term" value="F:RNA polymerase II general transcription initiation factor activity"/>
    <property type="evidence" value="ECO:0007669"/>
    <property type="project" value="TreeGrafter"/>
</dbReference>
<dbReference type="GO" id="GO:0003713">
    <property type="term" value="F:transcription coactivator activity"/>
    <property type="evidence" value="ECO:0007669"/>
    <property type="project" value="TreeGrafter"/>
</dbReference>
<dbReference type="GO" id="GO:0051123">
    <property type="term" value="P:RNA polymerase II preinitiation complex assembly"/>
    <property type="evidence" value="ECO:0007669"/>
    <property type="project" value="TreeGrafter"/>
</dbReference>
<dbReference type="CDD" id="cd07979">
    <property type="entry name" value="HFD_TAF9"/>
    <property type="match status" value="1"/>
</dbReference>
<dbReference type="Gene3D" id="1.10.20.10">
    <property type="entry name" value="Histone, subunit A"/>
    <property type="match status" value="1"/>
</dbReference>
<dbReference type="InterPro" id="IPR009072">
    <property type="entry name" value="Histone-fold"/>
</dbReference>
<dbReference type="InterPro" id="IPR003162">
    <property type="entry name" value="TFIID-31"/>
</dbReference>
<dbReference type="InterPro" id="IPR051431">
    <property type="entry name" value="TFIID_subunit_9"/>
</dbReference>
<dbReference type="PANTHER" id="PTHR48068">
    <property type="entry name" value="TAF9 RNA POLYMERASE II, TATA BOX-BINDING PROTEIN (TBP)-ASSOCIATED FACTOR"/>
    <property type="match status" value="1"/>
</dbReference>
<dbReference type="PANTHER" id="PTHR48068:SF4">
    <property type="entry name" value="TATA-BOX BINDING PROTEIN ASSOCIATED FACTOR 9"/>
    <property type="match status" value="1"/>
</dbReference>
<dbReference type="Pfam" id="PF02291">
    <property type="entry name" value="TFIID-31kDa"/>
    <property type="match status" value="1"/>
</dbReference>
<dbReference type="SUPFAM" id="SSF47113">
    <property type="entry name" value="Histone-fold"/>
    <property type="match status" value="1"/>
</dbReference>
<name>TAF9_ENCCU</name>
<proteinExistence type="evidence at protein level"/>
<evidence type="ECO:0000250" key="1"/>
<evidence type="ECO:0000269" key="2">
    <source>
    </source>
</evidence>
<evidence type="ECO:0000305" key="3"/>
<keyword id="KW-0539">Nucleus</keyword>
<keyword id="KW-1185">Reference proteome</keyword>
<keyword id="KW-0804">Transcription</keyword>
<keyword id="KW-0805">Transcription regulation</keyword>
<organism>
    <name type="scientific">Encephalitozoon cuniculi (strain GB-M1)</name>
    <name type="common">Microsporidian parasite</name>
    <dbReference type="NCBI Taxonomy" id="284813"/>
    <lineage>
        <taxon>Eukaryota</taxon>
        <taxon>Fungi</taxon>
        <taxon>Fungi incertae sedis</taxon>
        <taxon>Microsporidia</taxon>
        <taxon>Unikaryonidae</taxon>
        <taxon>Encephalitozoon</taxon>
    </lineage>
</organism>
<reference key="1">
    <citation type="journal article" date="2001" name="Genome Res.">
        <title>Sequence and analysis of chromosome I of the amitochondriate intracellular parasite Encephalitozoon cuniculi (Microspora).</title>
        <authorList>
            <person name="Peyret P."/>
            <person name="Katinka M.D."/>
            <person name="Duprat S."/>
            <person name="Duffieux F."/>
            <person name="Barbe V."/>
            <person name="Barbazanges M."/>
            <person name="Weissenbach J."/>
            <person name="Saurin W."/>
            <person name="Vivares C.P."/>
        </authorList>
    </citation>
    <scope>NUCLEOTIDE SEQUENCE [LARGE SCALE GENOMIC DNA]</scope>
    <source>
        <strain>GB-M1</strain>
    </source>
</reference>
<reference key="2">
    <citation type="journal article" date="2001" name="Nature">
        <title>Genome sequence and gene compaction of the eukaryote parasite Encephalitozoon cuniculi.</title>
        <authorList>
            <person name="Katinka M.D."/>
            <person name="Duprat S."/>
            <person name="Cornillot E."/>
            <person name="Metenier G."/>
            <person name="Thomarat F."/>
            <person name="Prensier G."/>
            <person name="Barbe V."/>
            <person name="Peyretaillade E."/>
            <person name="Brottier P."/>
            <person name="Wincker P."/>
            <person name="Delbac F."/>
            <person name="El Alaoui H."/>
            <person name="Peyret P."/>
            <person name="Saurin W."/>
            <person name="Gouy M."/>
            <person name="Weissenbach J."/>
            <person name="Vivares C.P."/>
        </authorList>
    </citation>
    <scope>NUCLEOTIDE SEQUENCE [LARGE SCALE GENOMIC DNA]</scope>
    <source>
        <strain>GB-M1</strain>
    </source>
</reference>
<reference key="3">
    <citation type="journal article" date="2006" name="Proteomics">
        <title>Proteomic analysis of the eukaryotic parasite Encephalitozoon cuniculi (microsporidia): a reference map for proteins expressed in late sporogonial stages.</title>
        <authorList>
            <person name="Brosson D."/>
            <person name="Kuhn L."/>
            <person name="Delbac F."/>
            <person name="Garin J."/>
            <person name="Vivares C.P."/>
            <person name="Texier C."/>
        </authorList>
    </citation>
    <scope>IDENTIFICATION BY MASS SPECTROMETRY [LARGE SCALE ANALYSIS]</scope>
    <scope>DEVELOPMENTAL STAGE</scope>
</reference>
<protein>
    <recommendedName>
        <fullName>Transcription initiation factor TFIID subunit 9</fullName>
    </recommendedName>
    <alternativeName>
        <fullName>TBP-associated factor 9</fullName>
    </alternativeName>
</protein>
<gene>
    <name type="primary">TAF9</name>
    <name type="ordered locus">ECU01_1330</name>
</gene>
<feature type="chain" id="PRO_0000383121" description="Transcription initiation factor TFIID subunit 9">
    <location>
        <begin position="1"/>
        <end position="137"/>
    </location>
</feature>
<feature type="domain" description="Histone-fold">
    <location>
        <begin position="9"/>
        <end position="71"/>
    </location>
</feature>
<comment type="function">
    <text evidence="1">Functions as a component of the DNA-binding general transcription factor complex TFIID. May also function as a component of transcription regulatory histone acetyl transferase (HAT) complexes such as SAGA. Binding of TFIID to a promoter (with or without TATA element) is the initial step in preinitiation complex (PIC) formation. TFIID plays a key role in the regulation of gene expression by RNA polymerase II through different activities such as transcription activator interaction, core promoter recognition and selectivity, TFIIA and TFIIB interaction, chromatin modification, facilitation of DNA opening and initiation of transcription (By similarity).</text>
</comment>
<comment type="subunit">
    <text evidence="1">Component of the DNA-binding general transcription factor complex TFIID. Component of histone acetyl transferase (HAT) complexes such as SAGA (By similarity).</text>
</comment>
<comment type="subcellular location">
    <subcellularLocation>
        <location evidence="1">Nucleus</location>
    </subcellularLocation>
</comment>
<comment type="developmental stage">
    <text evidence="2">Expressed in late sporogonial stages.</text>
</comment>
<comment type="similarity">
    <text evidence="3">Belongs to the TAF9 family.</text>
</comment>
<sequence length="137" mass="15431">MASGENLAPRDAKVISVILRSLGIEECEPKVIIQLLEFAYRYTTDVLEDALLFAKHTGRTHITTSDVKLALQTKVGRHFVPPPPRQYLSEISTMVNSKPLTIPDGENLIRVPPSSSALLNLDYEVLRKDSDKKRRIY</sequence>